<protein>
    <recommendedName>
        <fullName evidence="1">Probable 4-amino-4-deoxy-L-arabinose-phosphoundecaprenol flippase subunit ArnF</fullName>
        <shortName evidence="1">L-Ara4N-phosphoundecaprenol flippase subunit ArnF</shortName>
    </recommendedName>
    <alternativeName>
        <fullName evidence="1">Undecaprenyl phosphate-aminoarabinose flippase subunit ArnF</fullName>
    </alternativeName>
</protein>
<name>ARNF_SALA4</name>
<gene>
    <name evidence="1" type="primary">arnF</name>
    <name type="ordered locus">SeAg_B2439</name>
</gene>
<sequence length="125" mass="13096">MGVMWGLISVAIASLAQLSLGFAMMRLPSIAHPLAFISGLGALNAATLALFAGLAGYLVSVFCWHKTLHTLALSKAYALLSLSYVLVWVASMLLPGLQGAFSLKAMLGVLCIMAGVMLIFLPARS</sequence>
<proteinExistence type="inferred from homology"/>
<accession>B5EZI2</accession>
<comment type="function">
    <text evidence="1">Translocates 4-amino-4-deoxy-L-arabinose-phosphoundecaprenol (alpha-L-Ara4N-phosphoundecaprenol) from the cytoplasmic to the periplasmic side of the inner membrane.</text>
</comment>
<comment type="pathway">
    <text evidence="1">Bacterial outer membrane biogenesis; lipopolysaccharide biosynthesis.</text>
</comment>
<comment type="subunit">
    <text evidence="1">Heterodimer of ArnE and ArnF.</text>
</comment>
<comment type="subcellular location">
    <subcellularLocation>
        <location evidence="1">Cell inner membrane</location>
        <topology evidence="1">Multi-pass membrane protein</topology>
    </subcellularLocation>
</comment>
<comment type="similarity">
    <text evidence="1">Belongs to the ArnF family.</text>
</comment>
<evidence type="ECO:0000255" key="1">
    <source>
        <dbReference type="HAMAP-Rule" id="MF_00538"/>
    </source>
</evidence>
<organism>
    <name type="scientific">Salmonella agona (strain SL483)</name>
    <dbReference type="NCBI Taxonomy" id="454166"/>
    <lineage>
        <taxon>Bacteria</taxon>
        <taxon>Pseudomonadati</taxon>
        <taxon>Pseudomonadota</taxon>
        <taxon>Gammaproteobacteria</taxon>
        <taxon>Enterobacterales</taxon>
        <taxon>Enterobacteriaceae</taxon>
        <taxon>Salmonella</taxon>
    </lineage>
</organism>
<keyword id="KW-0997">Cell inner membrane</keyword>
<keyword id="KW-1003">Cell membrane</keyword>
<keyword id="KW-0441">Lipid A biosynthesis</keyword>
<keyword id="KW-0444">Lipid biosynthesis</keyword>
<keyword id="KW-0443">Lipid metabolism</keyword>
<keyword id="KW-0448">Lipopolysaccharide biosynthesis</keyword>
<keyword id="KW-0472">Membrane</keyword>
<keyword id="KW-0812">Transmembrane</keyword>
<keyword id="KW-1133">Transmembrane helix</keyword>
<keyword id="KW-0813">Transport</keyword>
<feature type="chain" id="PRO_1000128664" description="Probable 4-amino-4-deoxy-L-arabinose-phosphoundecaprenol flippase subunit ArnF">
    <location>
        <begin position="1"/>
        <end position="125"/>
    </location>
</feature>
<feature type="topological domain" description="Cytoplasmic" evidence="1">
    <location>
        <begin position="1"/>
        <end position="2"/>
    </location>
</feature>
<feature type="transmembrane region" description="Helical" evidence="1">
    <location>
        <begin position="3"/>
        <end position="23"/>
    </location>
</feature>
<feature type="topological domain" description="Periplasmic" evidence="1">
    <location>
        <begin position="24"/>
        <end position="33"/>
    </location>
</feature>
<feature type="transmembrane region" description="Helical" evidence="1">
    <location>
        <begin position="34"/>
        <end position="54"/>
    </location>
</feature>
<feature type="topological domain" description="Cytoplasmic" evidence="1">
    <location>
        <begin position="55"/>
        <end position="76"/>
    </location>
</feature>
<feature type="transmembrane region" description="Helical" evidence="1">
    <location>
        <begin position="77"/>
        <end position="97"/>
    </location>
</feature>
<feature type="topological domain" description="Periplasmic" evidence="1">
    <location>
        <begin position="98"/>
        <end position="100"/>
    </location>
</feature>
<feature type="transmembrane region" description="Helical" evidence="1">
    <location>
        <begin position="101"/>
        <end position="121"/>
    </location>
</feature>
<feature type="topological domain" description="Cytoplasmic" evidence="1">
    <location>
        <begin position="122"/>
        <end position="125"/>
    </location>
</feature>
<reference key="1">
    <citation type="journal article" date="2011" name="J. Bacteriol.">
        <title>Comparative genomics of 28 Salmonella enterica isolates: evidence for CRISPR-mediated adaptive sublineage evolution.</title>
        <authorList>
            <person name="Fricke W.F."/>
            <person name="Mammel M.K."/>
            <person name="McDermott P.F."/>
            <person name="Tartera C."/>
            <person name="White D.G."/>
            <person name="Leclerc J.E."/>
            <person name="Ravel J."/>
            <person name="Cebula T.A."/>
        </authorList>
    </citation>
    <scope>NUCLEOTIDE SEQUENCE [LARGE SCALE GENOMIC DNA]</scope>
    <source>
        <strain>SL483</strain>
    </source>
</reference>
<dbReference type="EMBL" id="CP001138">
    <property type="protein sequence ID" value="ACH50765.1"/>
    <property type="molecule type" value="Genomic_DNA"/>
</dbReference>
<dbReference type="RefSeq" id="WP_000538696.1">
    <property type="nucleotide sequence ID" value="NC_011149.1"/>
</dbReference>
<dbReference type="KEGG" id="sea:SeAg_B2439"/>
<dbReference type="HOGENOM" id="CLU_131462_1_0_6"/>
<dbReference type="UniPathway" id="UPA00030"/>
<dbReference type="Proteomes" id="UP000008819">
    <property type="component" value="Chromosome"/>
</dbReference>
<dbReference type="GO" id="GO:0005886">
    <property type="term" value="C:plasma membrane"/>
    <property type="evidence" value="ECO:0007669"/>
    <property type="project" value="UniProtKB-SubCell"/>
</dbReference>
<dbReference type="GO" id="GO:1901505">
    <property type="term" value="F:carbohydrate derivative transmembrane transporter activity"/>
    <property type="evidence" value="ECO:0007669"/>
    <property type="project" value="InterPro"/>
</dbReference>
<dbReference type="GO" id="GO:0009245">
    <property type="term" value="P:lipid A biosynthetic process"/>
    <property type="evidence" value="ECO:0007669"/>
    <property type="project" value="UniProtKB-UniRule"/>
</dbReference>
<dbReference type="GO" id="GO:0009103">
    <property type="term" value="P:lipopolysaccharide biosynthetic process"/>
    <property type="evidence" value="ECO:0007669"/>
    <property type="project" value="UniProtKB-UniRule"/>
</dbReference>
<dbReference type="Gene3D" id="1.10.3730.20">
    <property type="match status" value="1"/>
</dbReference>
<dbReference type="HAMAP" id="MF_00538">
    <property type="entry name" value="Flippase_ArnF"/>
    <property type="match status" value="1"/>
</dbReference>
<dbReference type="InterPro" id="IPR022832">
    <property type="entry name" value="Flippase_ArnF"/>
</dbReference>
<dbReference type="InterPro" id="IPR000390">
    <property type="entry name" value="Small_drug/metabolite_transptr"/>
</dbReference>
<dbReference type="NCBIfam" id="NF002816">
    <property type="entry name" value="PRK02971.1-2"/>
    <property type="match status" value="1"/>
</dbReference>
<dbReference type="PANTHER" id="PTHR30561:SF9">
    <property type="entry name" value="4-AMINO-4-DEOXY-L-ARABINOSE-PHOSPHOUNDECAPRENOL FLIPPASE SUBUNIT ARNF-RELATED"/>
    <property type="match status" value="1"/>
</dbReference>
<dbReference type="PANTHER" id="PTHR30561">
    <property type="entry name" value="SMR FAMILY PROTON-DEPENDENT DRUG EFFLUX TRANSPORTER SUGE"/>
    <property type="match status" value="1"/>
</dbReference>